<comment type="catalytic activity">
    <reaction>
        <text>3-oxoadipate + succinyl-CoA = 3-oxoadipyl-CoA + succinate</text>
        <dbReference type="Rhea" id="RHEA:12048"/>
        <dbReference type="ChEBI" id="CHEBI:15775"/>
        <dbReference type="ChEBI" id="CHEBI:30031"/>
        <dbReference type="ChEBI" id="CHEBI:57292"/>
        <dbReference type="ChEBI" id="CHEBI:57348"/>
        <dbReference type="EC" id="2.8.3.6"/>
    </reaction>
</comment>
<comment type="pathway">
    <text>Aromatic compound metabolism; beta-ketoadipate pathway; acetyl-CoA and succinyl-CoA from 3-oxoadipate: step 1/2.</text>
</comment>
<comment type="subunit">
    <text>Heterodimer.</text>
</comment>
<comment type="similarity">
    <text evidence="2">Belongs to the 3-oxoacid CoA-transferase subunit A family.</text>
</comment>
<keyword id="KW-0058">Aromatic hydrocarbons catabolism</keyword>
<keyword id="KW-0903">Direct protein sequencing</keyword>
<keyword id="KW-0808">Transferase</keyword>
<proteinExistence type="evidence at protein level"/>
<sequence>MINKTYESIASAVEGITDGSTIMVGGFGTAGMPSELIDGLIATGARDLTIISNNAGNGEIGLAALLMAGSVRKVVCSFPRQSDSYVFDELYRAGKIELEVVPQGNLAERIAAAGSGIGAFFSPTGYGTLLAEGKETREIDGRMYVLEMPLHADFALIKAHKGDRWGNLTYRKAARNFGPIMAMAAKTAIAQVDQVVELGELDPEHIITPGIFVQRVVAVSGAAASSIAKAI</sequence>
<feature type="chain" id="PRO_0000157907" description="3-oxoadipate CoA-transferase subunit A">
    <location>
        <begin position="1"/>
        <end position="231"/>
    </location>
</feature>
<feature type="binding site" evidence="1">
    <location>
        <begin position="25"/>
        <end position="31"/>
    </location>
    <ligand>
        <name>CoA</name>
        <dbReference type="ChEBI" id="CHEBI:57287"/>
    </ligand>
</feature>
<organism>
    <name type="scientific">Pseudomonas putida</name>
    <name type="common">Arthrobacter siderocapsulatus</name>
    <dbReference type="NCBI Taxonomy" id="303"/>
    <lineage>
        <taxon>Bacteria</taxon>
        <taxon>Pseudomonadati</taxon>
        <taxon>Pseudomonadota</taxon>
        <taxon>Gammaproteobacteria</taxon>
        <taxon>Pseudomonadales</taxon>
        <taxon>Pseudomonadaceae</taxon>
        <taxon>Pseudomonas</taxon>
    </lineage>
</organism>
<name>PCAI_PSEPU</name>
<protein>
    <recommendedName>
        <fullName>3-oxoadipate CoA-transferase subunit A</fullName>
        <ecNumber>2.8.3.6</ecNumber>
    </recommendedName>
    <alternativeName>
        <fullName>Beta-ketoadipate:succinyl-CoA transferase subunit A</fullName>
    </alternativeName>
</protein>
<reference key="1">
    <citation type="journal article" date="1992" name="J. Bacteriol.">
        <title>Characterization of the genes encoding beta-ketoadipate: succinyl-coenzyme A transferase in Pseudomonas putida.</title>
        <authorList>
            <person name="Parales R.E."/>
            <person name="Harwood C.S."/>
        </authorList>
    </citation>
    <scope>NUCLEOTIDE SEQUENCE [GENOMIC DNA]</scope>
    <source>
        <strain>PRS2000</strain>
    </source>
</reference>
<reference key="2">
    <citation type="journal article" date="1981" name="J. Biol. Chem.">
        <title>Evolutionarily homologous alpha 2 beta 2 oligomeric structures in beta-ketoadipate succinyl-CoA transferases from Acinetobacter calcoaceticus and Pseudomonas putida.</title>
        <authorList>
            <person name="Yeh W.-K."/>
            <person name="Ornston L.N."/>
        </authorList>
    </citation>
    <scope>PROTEIN SEQUENCE OF 1-6</scope>
</reference>
<dbReference type="EC" id="2.8.3.6"/>
<dbReference type="EMBL" id="M88763">
    <property type="protein sequence ID" value="AAA25922.1"/>
    <property type="molecule type" value="Genomic_DNA"/>
</dbReference>
<dbReference type="PIR" id="A42985">
    <property type="entry name" value="A42985"/>
</dbReference>
<dbReference type="SMR" id="Q01103"/>
<dbReference type="BioCyc" id="MetaCyc:MONOMER-3190"/>
<dbReference type="BRENDA" id="2.8.3.6">
    <property type="organism ID" value="5092"/>
</dbReference>
<dbReference type="UniPathway" id="UPA00157">
    <property type="reaction ID" value="UER00262"/>
</dbReference>
<dbReference type="GO" id="GO:0047569">
    <property type="term" value="F:3-oxoadipate CoA-transferase activity"/>
    <property type="evidence" value="ECO:0007669"/>
    <property type="project" value="UniProtKB-EC"/>
</dbReference>
<dbReference type="GO" id="GO:0042952">
    <property type="term" value="P:beta-ketoadipate pathway"/>
    <property type="evidence" value="ECO:0007669"/>
    <property type="project" value="UniProtKB-UniPathway"/>
</dbReference>
<dbReference type="Gene3D" id="3.40.1080.10">
    <property type="entry name" value="Glutaconate Coenzyme A-transferase"/>
    <property type="match status" value="1"/>
</dbReference>
<dbReference type="InterPro" id="IPR012792">
    <property type="entry name" value="3-oxoacid_CoA-transf_A"/>
</dbReference>
<dbReference type="InterPro" id="IPR004165">
    <property type="entry name" value="CoA_trans_fam_I"/>
</dbReference>
<dbReference type="InterPro" id="IPR004163">
    <property type="entry name" value="CoA_transf_BS"/>
</dbReference>
<dbReference type="InterPro" id="IPR037171">
    <property type="entry name" value="NagB/RpiA_transferase-like"/>
</dbReference>
<dbReference type="NCBIfam" id="TIGR02429">
    <property type="entry name" value="pcaI_scoA_fam"/>
    <property type="match status" value="1"/>
</dbReference>
<dbReference type="PANTHER" id="PTHR13707:SF60">
    <property type="entry name" value="ACETATE COA-TRANSFERASE SUBUNIT ALPHA"/>
    <property type="match status" value="1"/>
</dbReference>
<dbReference type="PANTHER" id="PTHR13707">
    <property type="entry name" value="KETOACID-COENZYME A TRANSFERASE"/>
    <property type="match status" value="1"/>
</dbReference>
<dbReference type="Pfam" id="PF01144">
    <property type="entry name" value="CoA_trans"/>
    <property type="match status" value="1"/>
</dbReference>
<dbReference type="SMART" id="SM00882">
    <property type="entry name" value="CoA_trans"/>
    <property type="match status" value="1"/>
</dbReference>
<dbReference type="SUPFAM" id="SSF100950">
    <property type="entry name" value="NagB/RpiA/CoA transferase-like"/>
    <property type="match status" value="1"/>
</dbReference>
<dbReference type="PROSITE" id="PS01273">
    <property type="entry name" value="COA_TRANSF_1"/>
    <property type="match status" value="1"/>
</dbReference>
<evidence type="ECO:0000255" key="1"/>
<evidence type="ECO:0000305" key="2"/>
<gene>
    <name type="primary">pcaI</name>
</gene>
<accession>Q01103</accession>